<comment type="function">
    <text evidence="6 7">Pre-mRNA alternative splicing regulator. Regulates alternative splicing of RBFOX2 to enhance the production of mRNA species that are targeted for nonsense-mediated decay (NMD).</text>
</comment>
<comment type="interaction">
    <interactant intactId="EBI-4567146">
        <id>Q8BIF2</id>
    </interactant>
    <interactant intactId="EBI-298954">
        <id>Q61221</id>
        <label>Hif1a</label>
    </interactant>
    <organismsDiffer>false</organismsDiffer>
    <experiments>2</experiments>
</comment>
<comment type="interaction">
    <interactant intactId="EBI-4567146">
        <id>Q8BIF2</id>
    </interactant>
    <interactant intactId="EBI-447269">
        <id>Q16665</id>
        <label>HIF1A</label>
    </interactant>
    <organismsDiffer>true</organismsDiffer>
    <experiments>2</experiments>
</comment>
<comment type="subcellular location">
    <subcellularLocation>
        <location>Nucleus</location>
    </subcellularLocation>
    <subcellularLocation>
        <location>Cytoplasm</location>
    </subcellularLocation>
</comment>
<comment type="subcellular location">
    <molecule>Isoform 1</molecule>
    <subcellularLocation>
        <location>Nucleus</location>
    </subcellularLocation>
</comment>
<comment type="subcellular location">
    <molecule>Isoform 4</molecule>
    <subcellularLocation>
        <location>Cytoplasm</location>
    </subcellularLocation>
</comment>
<comment type="subcellular location">
    <molecule>Isoform 5</molecule>
    <subcellularLocation>
        <location>Nucleus</location>
    </subcellularLocation>
</comment>
<comment type="alternative products">
    <event type="alternative splicing"/>
    <isoform>
        <id>Q8BIF2-1</id>
        <name>1</name>
        <name>Fox3v1</name>
        <name>Fox-3-L</name>
        <sequence type="displayed"/>
    </isoform>
    <isoform>
        <id>Q8BIF2-2</id>
        <name>2</name>
        <sequence type="described" ref="VSP_035220"/>
    </isoform>
    <isoform>
        <id>Q8BIF2-3</id>
        <name>3</name>
        <sequence type="described" ref="VSP_035219 VSP_035220"/>
    </isoform>
    <isoform>
        <id>Q8BIF2-4</id>
        <name>4</name>
        <name>Fox3v3</name>
        <sequence type="described" ref="VSP_043949 VSP_035220"/>
    </isoform>
    <isoform>
        <id>Q8BIF2-5</id>
        <name>5</name>
        <name>Fox3v2</name>
        <name>Fox-3-S</name>
        <sequence type="described" ref="VSP_043949"/>
    </isoform>
</comment>
<comment type="tissue specificity">
    <text evidence="4 5 6 7">Widely expressed in brain, including in cerebral cortex, hippocampus, thalamus, caudate/putamen, cerebellum, as well as in the spinal cord (at protein level). Not expressed in all neuronal cells within a region, in cerebellum, expression is absent in Purkinje cells (at protein level). Expressed in the retina in the ganglion cells and some cells in the inner nuclear layer, but absent from the photoreceptor cells and most cells in the inner nuclear layer (at protein level).</text>
</comment>
<comment type="developmental stage">
    <text evidence="4">In the neural tube, expressed as early as 9.5 dpc and expression is confined to the nervous system. By 12.5 dpc, can be found in the developing ventral horns and is also detected in the developing dorsal horns as well as in the dorsal root ganglion. Not detected in the ventricular zone, roof plate, floor plate or marginal zone (developing white matter). It is expressed from embryonic stage to adulthood.</text>
</comment>
<comment type="induction">
    <text evidence="6 7">By retinoic acid. Expression is up-regulated in P19 cells during neural differentiation upon retinoic acid treatment (at the protein level).</text>
</comment>
<comment type="PTM">
    <text evidence="13">Phosphorylated.</text>
</comment>
<comment type="disruption phenotype">
    <text evidence="8">Knockout mice have significantly reduced brain weight, impaired neurofilament expression and decreased white matter volume, but normal total body mass. They show increased susceptibility to seizures and reduced anxiety-related behaviors compared with wild type littermates, as well as defective hippocampal gene expression and deficits in synaptic transmission and plasticity in the dentate gyrus.</text>
</comment>
<comment type="caution">
    <text evidence="14">Initial characterization was derived from usage of a monoclonal antibody (A60) directed to an unknown protein called NeuN (PubMed:15605376, PubMed:1483388), but later identified as RBFOX3.</text>
</comment>
<proteinExistence type="evidence at protein level"/>
<sequence length="374" mass="40610">MAQPYPPAQYPPPPQNGIPAEYAPPPPHPTQDYSGQTPVPPEHGMTLYTPAQTHPEQPGTEASTQPIAGTQTVPQADEAAQTDNQQLHPSDPTEKQQPKRLHVSNIPFRFRDPDLRQMFGQFGKILDVEIIFNERGSKGFGFVTFETSSDADRAREKLNGTIVEGRKIEVNNATARVMTNKKPGNPYANGWKLNPVVGTVYGPEFYAVTSFPYPTTGTAVAYRGAHLRGRGRAVYNTFRAAPPPPPIPTYGAALEQTLVKMPVPWAGLAPCPLPPQQTPEPAYPTSPAFPPLSCPFASRVVYQDGFYGAEIYGGYAAYRYAQPAAATAAAYSDSYGRVYAAADPYHHTIGPTATYSIGTMASLCRGGYSRFTPY</sequence>
<gene>
    <name type="primary">Rbfox3</name>
    <name type="synonym">D11Bwg0517e</name>
    <name type="synonym">Hrnbp3</name>
</gene>
<accession>Q8BIF2</accession>
<accession>A2A4W7</accession>
<accession>A2A4W8</accession>
<accession>B7ZC12</accession>
<accession>B7ZC13</accession>
<accession>D1GI07</accession>
<accession>Q3TUE0</accession>
<accession>Q7TQI4</accession>
<evidence type="ECO:0000250" key="1"/>
<evidence type="ECO:0000255" key="2">
    <source>
        <dbReference type="PROSITE-ProRule" id="PRU00176"/>
    </source>
</evidence>
<evidence type="ECO:0000256" key="3">
    <source>
        <dbReference type="SAM" id="MobiDB-lite"/>
    </source>
</evidence>
<evidence type="ECO:0000269" key="4">
    <source>
    </source>
</evidence>
<evidence type="ECO:0000269" key="5">
    <source>
    </source>
</evidence>
<evidence type="ECO:0000269" key="6">
    <source>
    </source>
</evidence>
<evidence type="ECO:0000269" key="7">
    <source>
    </source>
</evidence>
<evidence type="ECO:0000269" key="8">
    <source>
    </source>
</evidence>
<evidence type="ECO:0000303" key="9">
    <source>
    </source>
</evidence>
<evidence type="ECO:0000303" key="10">
    <source>
    </source>
</evidence>
<evidence type="ECO:0000303" key="11">
    <source>
    </source>
</evidence>
<evidence type="ECO:0000305" key="12"/>
<evidence type="ECO:0000305" key="13">
    <source>
    </source>
</evidence>
<evidence type="ECO:0000305" key="14">
    <source>
    </source>
</evidence>
<evidence type="ECO:0007744" key="15">
    <source>
    </source>
</evidence>
<feature type="chain" id="PRO_0000349208" description="RNA binding protein fox-1 homolog 3">
    <location>
        <begin position="1"/>
        <end position="374"/>
    </location>
</feature>
<feature type="domain" description="RRM" evidence="2">
    <location>
        <begin position="99"/>
        <end position="175"/>
    </location>
</feature>
<feature type="region of interest" description="Disordered" evidence="3">
    <location>
        <begin position="1"/>
        <end position="105"/>
    </location>
</feature>
<feature type="compositionally biased region" description="Pro residues" evidence="3">
    <location>
        <begin position="1"/>
        <end position="29"/>
    </location>
</feature>
<feature type="compositionally biased region" description="Polar residues" evidence="3">
    <location>
        <begin position="49"/>
        <end position="74"/>
    </location>
</feature>
<feature type="site" description="Interaction with RNA" evidence="1">
    <location>
        <position position="100"/>
    </location>
</feature>
<feature type="site" description="Interaction with RNA" evidence="1">
    <location>
        <position position="108"/>
    </location>
</feature>
<feature type="site" description="Interaction with RNA" evidence="1">
    <location>
        <position position="109"/>
    </location>
</feature>
<feature type="site" description="Interaction with RNA" evidence="1">
    <location>
        <position position="133"/>
    </location>
</feature>
<feature type="site" description="Interaction with RNA" evidence="1">
    <location>
        <position position="138"/>
    </location>
</feature>
<feature type="site" description="Interaction with RNA" evidence="1">
    <location>
        <position position="142"/>
    </location>
</feature>
<feature type="site" description="Interaction with RNA" evidence="1">
    <location>
        <position position="166"/>
    </location>
</feature>
<feature type="site" description="Interaction with RNA" evidence="1">
    <location>
        <position position="176"/>
    </location>
</feature>
<feature type="modified residue" description="Asymmetric dimethylarginine; alternate" evidence="15">
    <location>
        <position position="223"/>
    </location>
</feature>
<feature type="modified residue" description="Omega-N-methylarginine; alternate" evidence="15">
    <location>
        <position position="223"/>
    </location>
</feature>
<feature type="modified residue" description="Asymmetric dimethylarginine" evidence="15">
    <location>
        <position position="319"/>
    </location>
</feature>
<feature type="splice variant" id="VSP_035219" description="In isoform 3." evidence="9">
    <location>
        <begin position="139"/>
        <end position="169"/>
    </location>
</feature>
<feature type="splice variant" id="VSP_043949" description="In isoform 4 and isoform 5." evidence="11">
    <location>
        <begin position="253"/>
        <end position="299"/>
    </location>
</feature>
<feature type="splice variant" id="VSP_035220" description="In isoform 2, isoform 3 and isoform 4." evidence="9 10">
    <location>
        <begin position="361"/>
        <end position="374"/>
    </location>
</feature>
<feature type="sequence conflict" description="In Ref. 1; BAC37531." evidence="12" ref="1">
    <original>A</original>
    <variation>V</variation>
    <location>
        <position position="266"/>
    </location>
</feature>
<protein>
    <recommendedName>
        <fullName>RNA binding protein fox-1 homolog 3</fullName>
    </recommendedName>
    <alternativeName>
        <fullName>Fox-1 homolog C</fullName>
    </alternativeName>
    <alternativeName>
        <fullName>Hexaribonucleotide-binding protein 3</fullName>
        <shortName>Fox-3</shortName>
    </alternativeName>
    <alternativeName>
        <fullName>Neuronal nuclei antigen</fullName>
        <shortName>NeuN antigen</shortName>
    </alternativeName>
</protein>
<organism>
    <name type="scientific">Mus musculus</name>
    <name type="common">Mouse</name>
    <dbReference type="NCBI Taxonomy" id="10090"/>
    <lineage>
        <taxon>Eukaryota</taxon>
        <taxon>Metazoa</taxon>
        <taxon>Chordata</taxon>
        <taxon>Craniata</taxon>
        <taxon>Vertebrata</taxon>
        <taxon>Euteleostomi</taxon>
        <taxon>Mammalia</taxon>
        <taxon>Eutheria</taxon>
        <taxon>Euarchontoglires</taxon>
        <taxon>Glires</taxon>
        <taxon>Rodentia</taxon>
        <taxon>Myomorpha</taxon>
        <taxon>Muroidea</taxon>
        <taxon>Muridae</taxon>
        <taxon>Murinae</taxon>
        <taxon>Mus</taxon>
        <taxon>Mus</taxon>
    </lineage>
</organism>
<keyword id="KW-0025">Alternative splicing</keyword>
<keyword id="KW-0963">Cytoplasm</keyword>
<keyword id="KW-0903">Direct protein sequencing</keyword>
<keyword id="KW-0488">Methylation</keyword>
<keyword id="KW-0507">mRNA processing</keyword>
<keyword id="KW-0508">mRNA splicing</keyword>
<keyword id="KW-0539">Nucleus</keyword>
<keyword id="KW-1185">Reference proteome</keyword>
<keyword id="KW-0694">RNA-binding</keyword>
<dbReference type="EMBL" id="FJ958310">
    <property type="protein sequence ID" value="ACY91937.1"/>
    <property type="molecule type" value="mRNA"/>
</dbReference>
<dbReference type="EMBL" id="FJ958311">
    <property type="protein sequence ID" value="ACY91938.1"/>
    <property type="molecule type" value="mRNA"/>
</dbReference>
<dbReference type="EMBL" id="AK079086">
    <property type="protein sequence ID" value="BAC37531.1"/>
    <property type="molecule type" value="mRNA"/>
</dbReference>
<dbReference type="EMBL" id="AK160816">
    <property type="protein sequence ID" value="BAE36031.1"/>
    <property type="molecule type" value="mRNA"/>
</dbReference>
<dbReference type="EMBL" id="AL591514">
    <property type="status" value="NOT_ANNOTATED_CDS"/>
    <property type="molecule type" value="Genomic_DNA"/>
</dbReference>
<dbReference type="EMBL" id="AL591544">
    <property type="status" value="NOT_ANNOTATED_CDS"/>
    <property type="molecule type" value="Genomic_DNA"/>
</dbReference>
<dbReference type="EMBL" id="AL591075">
    <property type="status" value="NOT_ANNOTATED_CDS"/>
    <property type="molecule type" value="Genomic_DNA"/>
</dbReference>
<dbReference type="EMBL" id="CH466558">
    <property type="protein sequence ID" value="EDL34674.1"/>
    <property type="molecule type" value="Genomic_DNA"/>
</dbReference>
<dbReference type="EMBL" id="BC054403">
    <property type="protein sequence ID" value="AAH54403.1"/>
    <property type="molecule type" value="mRNA"/>
</dbReference>
<dbReference type="CCDS" id="CCDS25705.1">
    <molecule id="Q8BIF2-4"/>
</dbReference>
<dbReference type="CCDS" id="CCDS25706.1">
    <molecule id="Q8BIF2-1"/>
</dbReference>
<dbReference type="CCDS" id="CCDS70358.1">
    <molecule id="Q8BIF2-3"/>
</dbReference>
<dbReference type="CCDS" id="CCDS70360.1">
    <molecule id="Q8BIF2-2"/>
</dbReference>
<dbReference type="RefSeq" id="NP_001020102.2">
    <molecule id="Q8BIF2-4"/>
    <property type="nucleotide sequence ID" value="NM_001024931.2"/>
</dbReference>
<dbReference type="RefSeq" id="NP_001034256.1">
    <molecule id="Q8BIF2-1"/>
    <property type="nucleotide sequence ID" value="NM_001039167.1"/>
</dbReference>
<dbReference type="RefSeq" id="NP_001034257.1">
    <property type="nucleotide sequence ID" value="NM_001039168.1"/>
</dbReference>
<dbReference type="RefSeq" id="NP_001272365.1">
    <molecule id="Q8BIF2-2"/>
    <property type="nucleotide sequence ID" value="NM_001285436.1"/>
</dbReference>
<dbReference type="RefSeq" id="NP_001272366.1">
    <molecule id="Q8BIF2-3"/>
    <property type="nucleotide sequence ID" value="NM_001285437.1"/>
</dbReference>
<dbReference type="RefSeq" id="NP_001272367.1">
    <molecule id="Q8BIF2-4"/>
    <property type="nucleotide sequence ID" value="NM_001285438.1"/>
</dbReference>
<dbReference type="RefSeq" id="XP_006533785.1">
    <molecule id="Q8BIF2-1"/>
    <property type="nucleotide sequence ID" value="XM_006533722.5"/>
</dbReference>
<dbReference type="RefSeq" id="XP_006533788.1">
    <molecule id="Q8BIF2-1"/>
    <property type="nucleotide sequence ID" value="XM_006533725.5"/>
</dbReference>
<dbReference type="RefSeq" id="XP_006533790.1">
    <molecule id="Q8BIF2-5"/>
    <property type="nucleotide sequence ID" value="XM_006533727.4"/>
</dbReference>
<dbReference type="RefSeq" id="XP_017170150.1">
    <molecule id="Q8BIF2-1"/>
    <property type="nucleotide sequence ID" value="XM_017314661.2"/>
</dbReference>
<dbReference type="RefSeq" id="XP_017170151.1">
    <molecule id="Q8BIF2-1"/>
    <property type="nucleotide sequence ID" value="XM_017314662.2"/>
</dbReference>
<dbReference type="RefSeq" id="XP_017170152.1">
    <molecule id="Q8BIF2-2"/>
    <property type="nucleotide sequence ID" value="XM_017314663.2"/>
</dbReference>
<dbReference type="RefSeq" id="XP_030101990.1">
    <molecule id="Q8BIF2-1"/>
    <property type="nucleotide sequence ID" value="XM_030246130.2"/>
</dbReference>
<dbReference type="RefSeq" id="XP_030101991.1">
    <molecule id="Q8BIF2-2"/>
    <property type="nucleotide sequence ID" value="XM_030246131.2"/>
</dbReference>
<dbReference type="RefSeq" id="XP_030101992.1">
    <molecule id="Q8BIF2-2"/>
    <property type="nucleotide sequence ID" value="XM_030246132.2"/>
</dbReference>
<dbReference type="RefSeq" id="XP_030101994.1">
    <molecule id="Q8BIF2-5"/>
    <property type="nucleotide sequence ID" value="XM_030246134.2"/>
</dbReference>
<dbReference type="RefSeq" id="XP_030101995.1">
    <molecule id="Q8BIF2-5"/>
    <property type="nucleotide sequence ID" value="XM_030246135.2"/>
</dbReference>
<dbReference type="RefSeq" id="XP_030101996.1">
    <molecule id="Q8BIF2-5"/>
    <property type="nucleotide sequence ID" value="XM_030246136.1"/>
</dbReference>
<dbReference type="RefSeq" id="XP_030101997.1">
    <molecule id="Q8BIF2-4"/>
    <property type="nucleotide sequence ID" value="XM_030246137.2"/>
</dbReference>
<dbReference type="RefSeq" id="XP_030101998.1">
    <molecule id="Q8BIF2-4"/>
    <property type="nucleotide sequence ID" value="XM_030246138.2"/>
</dbReference>
<dbReference type="RefSeq" id="XP_030101999.1">
    <molecule id="Q8BIF2-4"/>
    <property type="nucleotide sequence ID" value="XM_030246139.1"/>
</dbReference>
<dbReference type="RefSeq" id="XP_036012731.1">
    <molecule id="Q8BIF2-5"/>
    <property type="nucleotide sequence ID" value="XM_036156838.1"/>
</dbReference>
<dbReference type="RefSeq" id="XP_036012732.1">
    <molecule id="Q8BIF2-5"/>
    <property type="nucleotide sequence ID" value="XM_036156839.1"/>
</dbReference>
<dbReference type="RefSeq" id="XP_036012733.1">
    <molecule id="Q8BIF2-5"/>
    <property type="nucleotide sequence ID" value="XM_036156840.1"/>
</dbReference>
<dbReference type="SMR" id="Q8BIF2"/>
<dbReference type="BioGRID" id="206871">
    <property type="interactions" value="3"/>
</dbReference>
<dbReference type="FunCoup" id="Q8BIF2">
    <property type="interactions" value="664"/>
</dbReference>
<dbReference type="IntAct" id="Q8BIF2">
    <property type="interactions" value="4"/>
</dbReference>
<dbReference type="MINT" id="Q8BIF2"/>
<dbReference type="STRING" id="10090.ENSMUSP00000017576"/>
<dbReference type="GlyGen" id="Q8BIF2">
    <property type="glycosylation" value="6 sites, 2 N-linked glycans (2 sites), 1 O-linked glycan (2 sites)"/>
</dbReference>
<dbReference type="iPTMnet" id="Q8BIF2"/>
<dbReference type="PhosphoSitePlus" id="Q8BIF2"/>
<dbReference type="SwissPalm" id="Q8BIF2"/>
<dbReference type="PaxDb" id="10090-ENSMUSP00000017576"/>
<dbReference type="PeptideAtlas" id="Q8BIF2"/>
<dbReference type="ProteomicsDB" id="255181">
    <molecule id="Q8BIF2-1"/>
</dbReference>
<dbReference type="ProteomicsDB" id="255182">
    <molecule id="Q8BIF2-2"/>
</dbReference>
<dbReference type="ProteomicsDB" id="255183">
    <molecule id="Q8BIF2-3"/>
</dbReference>
<dbReference type="ProteomicsDB" id="255184">
    <molecule id="Q8BIF2-4"/>
</dbReference>
<dbReference type="ProteomicsDB" id="255185">
    <molecule id="Q8BIF2-5"/>
</dbReference>
<dbReference type="Antibodypedia" id="32645">
    <property type="antibodies" value="517 antibodies from 37 providers"/>
</dbReference>
<dbReference type="Ensembl" id="ENSMUST00000017576.11">
    <molecule id="Q8BIF2-1"/>
    <property type="protein sequence ID" value="ENSMUSP00000017576.5"/>
    <property type="gene ID" value="ENSMUSG00000025576.18"/>
</dbReference>
<dbReference type="Ensembl" id="ENSMUST00000069343.12">
    <molecule id="Q8BIF2-3"/>
    <property type="protein sequence ID" value="ENSMUSP00000069598.6"/>
    <property type="gene ID" value="ENSMUSG00000025576.18"/>
</dbReference>
<dbReference type="Ensembl" id="ENSMUST00000103023.8">
    <molecule id="Q8BIF2-4"/>
    <property type="protein sequence ID" value="ENSMUSP00000099312.2"/>
    <property type="gene ID" value="ENSMUSG00000025576.18"/>
</dbReference>
<dbReference type="Ensembl" id="ENSMUST00000106278.9">
    <molecule id="Q8BIF2-4"/>
    <property type="protein sequence ID" value="ENSMUSP00000101885.3"/>
    <property type="gene ID" value="ENSMUSG00000025576.18"/>
</dbReference>
<dbReference type="Ensembl" id="ENSMUST00000117731.8">
    <molecule id="Q8BIF2-2"/>
    <property type="protein sequence ID" value="ENSMUSP00000113636.2"/>
    <property type="gene ID" value="ENSMUSG00000025576.18"/>
</dbReference>
<dbReference type="Ensembl" id="ENSMUST00000120061.8">
    <molecule id="Q8BIF2-5"/>
    <property type="protein sequence ID" value="ENSMUSP00000113987.2"/>
    <property type="gene ID" value="ENSMUSG00000025576.18"/>
</dbReference>
<dbReference type="GeneID" id="52897"/>
<dbReference type="KEGG" id="mmu:52897"/>
<dbReference type="UCSC" id="uc007mpl.1">
    <molecule id="Q8BIF2-4"/>
    <property type="organism name" value="mouse"/>
</dbReference>
<dbReference type="UCSC" id="uc007mpm.1">
    <molecule id="Q8BIF2-5"/>
    <property type="organism name" value="mouse"/>
</dbReference>
<dbReference type="UCSC" id="uc007mpn.1">
    <molecule id="Q8BIF2-1"/>
    <property type="organism name" value="mouse"/>
</dbReference>
<dbReference type="UCSC" id="uc007mpp.1">
    <molecule id="Q8BIF2-3"/>
    <property type="organism name" value="mouse"/>
</dbReference>
<dbReference type="AGR" id="MGI:106368"/>
<dbReference type="CTD" id="146713"/>
<dbReference type="MGI" id="MGI:106368">
    <property type="gene designation" value="Rbfox3"/>
</dbReference>
<dbReference type="VEuPathDB" id="HostDB:ENSMUSG00000025576"/>
<dbReference type="eggNOG" id="KOG0125">
    <property type="taxonomic scope" value="Eukaryota"/>
</dbReference>
<dbReference type="GeneTree" id="ENSGT00940000159924"/>
<dbReference type="HOGENOM" id="CLU_048440_0_0_1"/>
<dbReference type="InParanoid" id="Q8BIF2"/>
<dbReference type="OMA" id="AAEPYHH"/>
<dbReference type="OrthoDB" id="5382468at2759"/>
<dbReference type="PhylomeDB" id="Q8BIF2"/>
<dbReference type="TreeFam" id="TF315942"/>
<dbReference type="BioGRID-ORCS" id="52897">
    <property type="hits" value="3 hits in 76 CRISPR screens"/>
</dbReference>
<dbReference type="ChiTaRS" id="Rbfox3">
    <property type="organism name" value="mouse"/>
</dbReference>
<dbReference type="PRO" id="PR:Q8BIF2"/>
<dbReference type="Proteomes" id="UP000000589">
    <property type="component" value="Chromosome 11"/>
</dbReference>
<dbReference type="RNAct" id="Q8BIF2">
    <property type="molecule type" value="protein"/>
</dbReference>
<dbReference type="Bgee" id="ENSMUSG00000025576">
    <property type="expression patterns" value="Expressed in piriform cortex and 138 other cell types or tissues"/>
</dbReference>
<dbReference type="ExpressionAtlas" id="Q8BIF2">
    <property type="expression patterns" value="baseline and differential"/>
</dbReference>
<dbReference type="GO" id="GO:0005737">
    <property type="term" value="C:cytoplasm"/>
    <property type="evidence" value="ECO:0000314"/>
    <property type="project" value="MGI"/>
</dbReference>
<dbReference type="GO" id="GO:0043025">
    <property type="term" value="C:neuronal cell body"/>
    <property type="evidence" value="ECO:0000314"/>
    <property type="project" value="MGI"/>
</dbReference>
<dbReference type="GO" id="GO:0005654">
    <property type="term" value="C:nucleoplasm"/>
    <property type="evidence" value="ECO:0000304"/>
    <property type="project" value="Reactome"/>
</dbReference>
<dbReference type="GO" id="GO:0005634">
    <property type="term" value="C:nucleus"/>
    <property type="evidence" value="ECO:0000314"/>
    <property type="project" value="MGI"/>
</dbReference>
<dbReference type="GO" id="GO:0043204">
    <property type="term" value="C:perikaryon"/>
    <property type="evidence" value="ECO:0000314"/>
    <property type="project" value="MGI"/>
</dbReference>
<dbReference type="GO" id="GO:0003677">
    <property type="term" value="F:DNA binding"/>
    <property type="evidence" value="ECO:0000314"/>
    <property type="project" value="MGI"/>
</dbReference>
<dbReference type="GO" id="GO:0003723">
    <property type="term" value="F:RNA binding"/>
    <property type="evidence" value="ECO:0007669"/>
    <property type="project" value="UniProtKB-KW"/>
</dbReference>
<dbReference type="GO" id="GO:0006397">
    <property type="term" value="P:mRNA processing"/>
    <property type="evidence" value="ECO:0007669"/>
    <property type="project" value="UniProtKB-KW"/>
</dbReference>
<dbReference type="GO" id="GO:0007399">
    <property type="term" value="P:nervous system development"/>
    <property type="evidence" value="ECO:0007669"/>
    <property type="project" value="InterPro"/>
</dbReference>
<dbReference type="GO" id="GO:0000381">
    <property type="term" value="P:regulation of alternative mRNA splicing, via spliceosome"/>
    <property type="evidence" value="ECO:0000314"/>
    <property type="project" value="MGI"/>
</dbReference>
<dbReference type="GO" id="GO:0008380">
    <property type="term" value="P:RNA splicing"/>
    <property type="evidence" value="ECO:0007669"/>
    <property type="project" value="UniProtKB-KW"/>
</dbReference>
<dbReference type="CDD" id="cd12407">
    <property type="entry name" value="RRM_FOX1_like"/>
    <property type="match status" value="1"/>
</dbReference>
<dbReference type="FunFam" id="3.30.70.330:FF:000004">
    <property type="entry name" value="RNA binding fox-1 homolog 1"/>
    <property type="match status" value="1"/>
</dbReference>
<dbReference type="Gene3D" id="3.30.70.330">
    <property type="match status" value="1"/>
</dbReference>
<dbReference type="InterPro" id="IPR025670">
    <property type="entry name" value="Fox-1_C_dom"/>
</dbReference>
<dbReference type="InterPro" id="IPR034237">
    <property type="entry name" value="FOX1_RRM"/>
</dbReference>
<dbReference type="InterPro" id="IPR012677">
    <property type="entry name" value="Nucleotide-bd_a/b_plait_sf"/>
</dbReference>
<dbReference type="InterPro" id="IPR035979">
    <property type="entry name" value="RBD_domain_sf"/>
</dbReference>
<dbReference type="InterPro" id="IPR017325">
    <property type="entry name" value="RBFOX1-3"/>
</dbReference>
<dbReference type="InterPro" id="IPR047131">
    <property type="entry name" value="RBFOX1-like"/>
</dbReference>
<dbReference type="InterPro" id="IPR000504">
    <property type="entry name" value="RRM_dom"/>
</dbReference>
<dbReference type="PANTHER" id="PTHR15597">
    <property type="entry name" value="ATAXIN 2-BINDING PROTEIN 1-RELATED"/>
    <property type="match status" value="1"/>
</dbReference>
<dbReference type="PANTHER" id="PTHR15597:SF25">
    <property type="entry name" value="RNA BINDING PROTEIN FOX-1 HOMOLOG 3"/>
    <property type="match status" value="1"/>
</dbReference>
<dbReference type="Pfam" id="PF12414">
    <property type="entry name" value="Fox-1_C"/>
    <property type="match status" value="1"/>
</dbReference>
<dbReference type="Pfam" id="PF00076">
    <property type="entry name" value="RRM_1"/>
    <property type="match status" value="1"/>
</dbReference>
<dbReference type="PIRSF" id="PIRSF037932">
    <property type="entry name" value="Ataxin_2_bd_A2BP"/>
    <property type="match status" value="1"/>
</dbReference>
<dbReference type="SMART" id="SM00360">
    <property type="entry name" value="RRM"/>
    <property type="match status" value="1"/>
</dbReference>
<dbReference type="SUPFAM" id="SSF54928">
    <property type="entry name" value="RNA-binding domain, RBD"/>
    <property type="match status" value="1"/>
</dbReference>
<dbReference type="PROSITE" id="PS50102">
    <property type="entry name" value="RRM"/>
    <property type="match status" value="1"/>
</dbReference>
<name>RFOX3_MOUSE</name>
<reference key="1">
    <citation type="journal article" date="2009" name="J. Biol. Chem.">
        <title>Identification of neuronal nuclei (NeuN) as Fox-3, a new member of the Fox-1 gene family of splicing factors.</title>
        <authorList>
            <person name="Kim K.K."/>
            <person name="Adelstein R.S."/>
            <person name="Kawamoto S."/>
        </authorList>
    </citation>
    <scope>NUCLEOTIDE SEQUENCE [MRNA] (ISOFORMS 1 AND 5)</scope>
    <scope>PROTEIN SEQUENCE OF 139-153; 156-166 AND 320-360</scope>
    <scope>FUNCTION</scope>
    <scope>SUBCELLULAR LOCATION</scope>
    <scope>TISSUE SPECIFICITY</scope>
    <scope>INDUCTION BY RETINOIC ACID</scope>
    <source>
        <tissue>Brain</tissue>
    </source>
</reference>
<reference key="2">
    <citation type="journal article" date="2005" name="Science">
        <title>The transcriptional landscape of the mammalian genome.</title>
        <authorList>
            <person name="Carninci P."/>
            <person name="Kasukawa T."/>
            <person name="Katayama S."/>
            <person name="Gough J."/>
            <person name="Frith M.C."/>
            <person name="Maeda N."/>
            <person name="Oyama R."/>
            <person name="Ravasi T."/>
            <person name="Lenhard B."/>
            <person name="Wells C."/>
            <person name="Kodzius R."/>
            <person name="Shimokawa K."/>
            <person name="Bajic V.B."/>
            <person name="Brenner S.E."/>
            <person name="Batalov S."/>
            <person name="Forrest A.R."/>
            <person name="Zavolan M."/>
            <person name="Davis M.J."/>
            <person name="Wilming L.G."/>
            <person name="Aidinis V."/>
            <person name="Allen J.E."/>
            <person name="Ambesi-Impiombato A."/>
            <person name="Apweiler R."/>
            <person name="Aturaliya R.N."/>
            <person name="Bailey T.L."/>
            <person name="Bansal M."/>
            <person name="Baxter L."/>
            <person name="Beisel K.W."/>
            <person name="Bersano T."/>
            <person name="Bono H."/>
            <person name="Chalk A.M."/>
            <person name="Chiu K.P."/>
            <person name="Choudhary V."/>
            <person name="Christoffels A."/>
            <person name="Clutterbuck D.R."/>
            <person name="Crowe M.L."/>
            <person name="Dalla E."/>
            <person name="Dalrymple B.P."/>
            <person name="de Bono B."/>
            <person name="Della Gatta G."/>
            <person name="di Bernardo D."/>
            <person name="Down T."/>
            <person name="Engstrom P."/>
            <person name="Fagiolini M."/>
            <person name="Faulkner G."/>
            <person name="Fletcher C.F."/>
            <person name="Fukushima T."/>
            <person name="Furuno M."/>
            <person name="Futaki S."/>
            <person name="Gariboldi M."/>
            <person name="Georgii-Hemming P."/>
            <person name="Gingeras T.R."/>
            <person name="Gojobori T."/>
            <person name="Green R.E."/>
            <person name="Gustincich S."/>
            <person name="Harbers M."/>
            <person name="Hayashi Y."/>
            <person name="Hensch T.K."/>
            <person name="Hirokawa N."/>
            <person name="Hill D."/>
            <person name="Huminiecki L."/>
            <person name="Iacono M."/>
            <person name="Ikeo K."/>
            <person name="Iwama A."/>
            <person name="Ishikawa T."/>
            <person name="Jakt M."/>
            <person name="Kanapin A."/>
            <person name="Katoh M."/>
            <person name="Kawasawa Y."/>
            <person name="Kelso J."/>
            <person name="Kitamura H."/>
            <person name="Kitano H."/>
            <person name="Kollias G."/>
            <person name="Krishnan S.P."/>
            <person name="Kruger A."/>
            <person name="Kummerfeld S.K."/>
            <person name="Kurochkin I.V."/>
            <person name="Lareau L.F."/>
            <person name="Lazarevic D."/>
            <person name="Lipovich L."/>
            <person name="Liu J."/>
            <person name="Liuni S."/>
            <person name="McWilliam S."/>
            <person name="Madan Babu M."/>
            <person name="Madera M."/>
            <person name="Marchionni L."/>
            <person name="Matsuda H."/>
            <person name="Matsuzawa S."/>
            <person name="Miki H."/>
            <person name="Mignone F."/>
            <person name="Miyake S."/>
            <person name="Morris K."/>
            <person name="Mottagui-Tabar S."/>
            <person name="Mulder N."/>
            <person name="Nakano N."/>
            <person name="Nakauchi H."/>
            <person name="Ng P."/>
            <person name="Nilsson R."/>
            <person name="Nishiguchi S."/>
            <person name="Nishikawa S."/>
            <person name="Nori F."/>
            <person name="Ohara O."/>
            <person name="Okazaki Y."/>
            <person name="Orlando V."/>
            <person name="Pang K.C."/>
            <person name="Pavan W.J."/>
            <person name="Pavesi G."/>
            <person name="Pesole G."/>
            <person name="Petrovsky N."/>
            <person name="Piazza S."/>
            <person name="Reed J."/>
            <person name="Reid J.F."/>
            <person name="Ring B.Z."/>
            <person name="Ringwald M."/>
            <person name="Rost B."/>
            <person name="Ruan Y."/>
            <person name="Salzberg S.L."/>
            <person name="Sandelin A."/>
            <person name="Schneider C."/>
            <person name="Schoenbach C."/>
            <person name="Sekiguchi K."/>
            <person name="Semple C.A."/>
            <person name="Seno S."/>
            <person name="Sessa L."/>
            <person name="Sheng Y."/>
            <person name="Shibata Y."/>
            <person name="Shimada H."/>
            <person name="Shimada K."/>
            <person name="Silva D."/>
            <person name="Sinclair B."/>
            <person name="Sperling S."/>
            <person name="Stupka E."/>
            <person name="Sugiura K."/>
            <person name="Sultana R."/>
            <person name="Takenaka Y."/>
            <person name="Taki K."/>
            <person name="Tammoja K."/>
            <person name="Tan S.L."/>
            <person name="Tang S."/>
            <person name="Taylor M.S."/>
            <person name="Tegner J."/>
            <person name="Teichmann S.A."/>
            <person name="Ueda H.R."/>
            <person name="van Nimwegen E."/>
            <person name="Verardo R."/>
            <person name="Wei C.L."/>
            <person name="Yagi K."/>
            <person name="Yamanishi H."/>
            <person name="Zabarovsky E."/>
            <person name="Zhu S."/>
            <person name="Zimmer A."/>
            <person name="Hide W."/>
            <person name="Bult C."/>
            <person name="Grimmond S.M."/>
            <person name="Teasdale R.D."/>
            <person name="Liu E.T."/>
            <person name="Brusic V."/>
            <person name="Quackenbush J."/>
            <person name="Wahlestedt C."/>
            <person name="Mattick J.S."/>
            <person name="Hume D.A."/>
            <person name="Kai C."/>
            <person name="Sasaki D."/>
            <person name="Tomaru Y."/>
            <person name="Fukuda S."/>
            <person name="Kanamori-Katayama M."/>
            <person name="Suzuki M."/>
            <person name="Aoki J."/>
            <person name="Arakawa T."/>
            <person name="Iida J."/>
            <person name="Imamura K."/>
            <person name="Itoh M."/>
            <person name="Kato T."/>
            <person name="Kawaji H."/>
            <person name="Kawagashira N."/>
            <person name="Kawashima T."/>
            <person name="Kojima M."/>
            <person name="Kondo S."/>
            <person name="Konno H."/>
            <person name="Nakano K."/>
            <person name="Ninomiya N."/>
            <person name="Nishio T."/>
            <person name="Okada M."/>
            <person name="Plessy C."/>
            <person name="Shibata K."/>
            <person name="Shiraki T."/>
            <person name="Suzuki S."/>
            <person name="Tagami M."/>
            <person name="Waki K."/>
            <person name="Watahiki A."/>
            <person name="Okamura-Oho Y."/>
            <person name="Suzuki H."/>
            <person name="Kawai J."/>
            <person name="Hayashizaki Y."/>
        </authorList>
    </citation>
    <scope>NUCLEOTIDE SEQUENCE [LARGE SCALE MRNA] (ISOFORMS 1 AND 2)</scope>
    <source>
        <strain>C57BL/6J</strain>
        <tissue>Diencephalon</tissue>
        <tissue>Head</tissue>
    </source>
</reference>
<reference key="3">
    <citation type="journal article" date="2009" name="PLoS Biol.">
        <title>Lineage-specific biology revealed by a finished genome assembly of the mouse.</title>
        <authorList>
            <person name="Church D.M."/>
            <person name="Goodstadt L."/>
            <person name="Hillier L.W."/>
            <person name="Zody M.C."/>
            <person name="Goldstein S."/>
            <person name="She X."/>
            <person name="Bult C.J."/>
            <person name="Agarwala R."/>
            <person name="Cherry J.L."/>
            <person name="DiCuccio M."/>
            <person name="Hlavina W."/>
            <person name="Kapustin Y."/>
            <person name="Meric P."/>
            <person name="Maglott D."/>
            <person name="Birtle Z."/>
            <person name="Marques A.C."/>
            <person name="Graves T."/>
            <person name="Zhou S."/>
            <person name="Teague B."/>
            <person name="Potamousis K."/>
            <person name="Churas C."/>
            <person name="Place M."/>
            <person name="Herschleb J."/>
            <person name="Runnheim R."/>
            <person name="Forrest D."/>
            <person name="Amos-Landgraf J."/>
            <person name="Schwartz D.C."/>
            <person name="Cheng Z."/>
            <person name="Lindblad-Toh K."/>
            <person name="Eichler E.E."/>
            <person name="Ponting C.P."/>
        </authorList>
    </citation>
    <scope>NUCLEOTIDE SEQUENCE [LARGE SCALE GENOMIC DNA]</scope>
    <source>
        <strain>C57BL/6J</strain>
    </source>
</reference>
<reference key="4">
    <citation type="submission" date="2005-07" db="EMBL/GenBank/DDBJ databases">
        <authorList>
            <person name="Mural R.J."/>
            <person name="Adams M.D."/>
            <person name="Myers E.W."/>
            <person name="Smith H.O."/>
            <person name="Venter J.C."/>
        </authorList>
    </citation>
    <scope>NUCLEOTIDE SEQUENCE [LARGE SCALE GENOMIC DNA]</scope>
</reference>
<reference key="5">
    <citation type="journal article" date="2004" name="Genome Res.">
        <title>The status, quality, and expansion of the NIH full-length cDNA project: the Mammalian Gene Collection (MGC).</title>
        <authorList>
            <consortium name="The MGC Project Team"/>
        </authorList>
    </citation>
    <scope>NUCLEOTIDE SEQUENCE [LARGE SCALE MRNA] (ISOFORM 3)</scope>
    <source>
        <tissue>Eye</tissue>
    </source>
</reference>
<reference key="6">
    <citation type="journal article" date="2011" name="PLoS ONE">
        <title>NeuN/Rbfox3 nuclear and cytoplasmic isoforms differentially regulate alternative splicing and nonsense-mediated decay of Rbfox2.</title>
        <authorList>
            <person name="Dredge B.K."/>
            <person name="Jensen K.B."/>
        </authorList>
    </citation>
    <scope>PROTEIN SEQUENCE OF 102-135; 139-153; 192-201; 239-250 AND 319-337</scope>
    <scope>FUNCTION</scope>
    <scope>SUBCELLULAR LOCATION</scope>
    <scope>ALTERNATIVE SPLICING</scope>
    <scope>TISSUE SPECIFICITY</scope>
    <scope>INDUCTION BY RETINOIC ACID</scope>
    <scope>IDENTIFICATION BY MASS SPECTROMETRY (ISOFORMS 1; 4 AND 5)</scope>
</reference>
<reference key="7">
    <citation type="journal article" date="1992" name="Development">
        <title>NeuN, a neuronal specific nuclear protein in vertebrates.</title>
        <authorList>
            <person name="Mullen R.J."/>
            <person name="Buck C.R."/>
            <person name="Smith A.M."/>
        </authorList>
    </citation>
    <scope>SUBCELLULAR LOCATION</scope>
    <scope>TISSUE SPECIFICITY</scope>
    <scope>DEVELOPMENTAL STAGE</scope>
</reference>
<reference key="8">
    <citation type="journal article" date="2005" name="J. Neurosci. Res.">
        <title>Characterization of the neuronal marker NeuN as a multiply phosphorylated antigen with discrete subcellular localization.</title>
        <authorList>
            <person name="Lind D."/>
            <person name="Franken S."/>
            <person name="Kappler J."/>
            <person name="Jankowski J."/>
            <person name="Schilling K."/>
        </authorList>
    </citation>
    <scope>SUBCELLULAR LOCATION</scope>
    <scope>TISSUE SPECIFICITY</scope>
    <scope>PHOSPHORYLATION</scope>
</reference>
<reference key="9">
    <citation type="journal article" date="2010" name="RNA">
        <title>Autoregulation of Fox protein expression to produce dominant negative splicing factors.</title>
        <authorList>
            <person name="Damianov A."/>
            <person name="Black D.L."/>
        </authorList>
    </citation>
    <scope>ALTERNATIVE SPLICING</scope>
</reference>
<reference key="10">
    <citation type="journal article" date="2014" name="Mol. Cell. Proteomics">
        <title>Immunoaffinity enrichment and mass spectrometry analysis of protein methylation.</title>
        <authorList>
            <person name="Guo A."/>
            <person name="Gu H."/>
            <person name="Zhou J."/>
            <person name="Mulhern D."/>
            <person name="Wang Y."/>
            <person name="Lee K.A."/>
            <person name="Yang V."/>
            <person name="Aguiar M."/>
            <person name="Kornhauser J."/>
            <person name="Jia X."/>
            <person name="Ren J."/>
            <person name="Beausoleil S.A."/>
            <person name="Silva J.C."/>
            <person name="Vemulapalli V."/>
            <person name="Bedford M.T."/>
            <person name="Comb M.J."/>
        </authorList>
    </citation>
    <scope>METHYLATION [LARGE SCALE ANALYSIS] AT ARG-223 AND ARG-319</scope>
    <scope>IDENTIFICATION BY MASS SPECTROMETRY [LARGE SCALE ANALYSIS]</scope>
    <source>
        <tissue>Brain</tissue>
        <tissue>Embryo</tissue>
    </source>
</reference>
<reference key="11">
    <citation type="journal article" date="2015" name="Sci. Rep.">
        <title>RBFOX3/NeuN is required for hippocampal circuit balance and function.</title>
        <authorList>
            <person name="Wang H.Y."/>
            <person name="Hsieh P.F."/>
            <person name="Huang D.F."/>
            <person name="Chin P.S."/>
            <person name="Chou C.H."/>
            <person name="Tung C.C."/>
            <person name="Chen S.Y."/>
            <person name="Lee L.J."/>
            <person name="Gau S.S."/>
            <person name="Huang H.S."/>
        </authorList>
    </citation>
    <scope>DISRUPTION PHENOTYPE</scope>
</reference>